<accession>A5FV22</accession>
<keyword id="KW-0963">Cytoplasm</keyword>
<keyword id="KW-1185">Reference proteome</keyword>
<keyword id="KW-0690">Ribosome biogenesis</keyword>
<protein>
    <recommendedName>
        <fullName evidence="1">Ribosome-binding factor A</fullName>
    </recommendedName>
</protein>
<proteinExistence type="inferred from homology"/>
<name>RBFA_ACICJ</name>
<reference key="1">
    <citation type="submission" date="2007-05" db="EMBL/GenBank/DDBJ databases">
        <title>Complete sequence of chromosome of Acidiphilium cryptum JF-5.</title>
        <authorList>
            <consortium name="US DOE Joint Genome Institute"/>
            <person name="Copeland A."/>
            <person name="Lucas S."/>
            <person name="Lapidus A."/>
            <person name="Barry K."/>
            <person name="Detter J.C."/>
            <person name="Glavina del Rio T."/>
            <person name="Hammon N."/>
            <person name="Israni S."/>
            <person name="Dalin E."/>
            <person name="Tice H."/>
            <person name="Pitluck S."/>
            <person name="Sims D."/>
            <person name="Brettin T."/>
            <person name="Bruce D."/>
            <person name="Han C."/>
            <person name="Schmutz J."/>
            <person name="Larimer F."/>
            <person name="Land M."/>
            <person name="Hauser L."/>
            <person name="Kyrpides N."/>
            <person name="Kim E."/>
            <person name="Magnuson T."/>
            <person name="Richardson P."/>
        </authorList>
    </citation>
    <scope>NUCLEOTIDE SEQUENCE [LARGE SCALE GENOMIC DNA]</scope>
    <source>
        <strain>JF-5</strain>
    </source>
</reference>
<dbReference type="EMBL" id="CP000697">
    <property type="protein sequence ID" value="ABQ29454.1"/>
    <property type="molecule type" value="Genomic_DNA"/>
</dbReference>
<dbReference type="RefSeq" id="WP_011941368.1">
    <property type="nucleotide sequence ID" value="NC_009484.1"/>
</dbReference>
<dbReference type="SMR" id="A5FV22"/>
<dbReference type="STRING" id="349163.Acry_0226"/>
<dbReference type="KEGG" id="acr:Acry_0226"/>
<dbReference type="eggNOG" id="COG0858">
    <property type="taxonomic scope" value="Bacteria"/>
</dbReference>
<dbReference type="HOGENOM" id="CLU_089475_1_0_5"/>
<dbReference type="Proteomes" id="UP000000245">
    <property type="component" value="Chromosome"/>
</dbReference>
<dbReference type="GO" id="GO:0005829">
    <property type="term" value="C:cytosol"/>
    <property type="evidence" value="ECO:0007669"/>
    <property type="project" value="TreeGrafter"/>
</dbReference>
<dbReference type="GO" id="GO:0043024">
    <property type="term" value="F:ribosomal small subunit binding"/>
    <property type="evidence" value="ECO:0007669"/>
    <property type="project" value="TreeGrafter"/>
</dbReference>
<dbReference type="GO" id="GO:0030490">
    <property type="term" value="P:maturation of SSU-rRNA"/>
    <property type="evidence" value="ECO:0007669"/>
    <property type="project" value="UniProtKB-UniRule"/>
</dbReference>
<dbReference type="Gene3D" id="3.30.300.20">
    <property type="match status" value="1"/>
</dbReference>
<dbReference type="HAMAP" id="MF_00003">
    <property type="entry name" value="RbfA"/>
    <property type="match status" value="1"/>
</dbReference>
<dbReference type="InterPro" id="IPR015946">
    <property type="entry name" value="KH_dom-like_a/b"/>
</dbReference>
<dbReference type="InterPro" id="IPR000238">
    <property type="entry name" value="RbfA"/>
</dbReference>
<dbReference type="InterPro" id="IPR023799">
    <property type="entry name" value="RbfA_dom_sf"/>
</dbReference>
<dbReference type="InterPro" id="IPR020053">
    <property type="entry name" value="Ribosome-bd_factorA_CS"/>
</dbReference>
<dbReference type="NCBIfam" id="NF001802">
    <property type="entry name" value="PRK00521.2-5"/>
    <property type="match status" value="1"/>
</dbReference>
<dbReference type="NCBIfam" id="TIGR00082">
    <property type="entry name" value="rbfA"/>
    <property type="match status" value="1"/>
</dbReference>
<dbReference type="PANTHER" id="PTHR33515">
    <property type="entry name" value="RIBOSOME-BINDING FACTOR A, CHLOROPLASTIC-RELATED"/>
    <property type="match status" value="1"/>
</dbReference>
<dbReference type="PANTHER" id="PTHR33515:SF1">
    <property type="entry name" value="RIBOSOME-BINDING FACTOR A, CHLOROPLASTIC-RELATED"/>
    <property type="match status" value="1"/>
</dbReference>
<dbReference type="Pfam" id="PF02033">
    <property type="entry name" value="RBFA"/>
    <property type="match status" value="1"/>
</dbReference>
<dbReference type="SUPFAM" id="SSF89919">
    <property type="entry name" value="Ribosome-binding factor A, RbfA"/>
    <property type="match status" value="1"/>
</dbReference>
<dbReference type="PROSITE" id="PS01319">
    <property type="entry name" value="RBFA"/>
    <property type="match status" value="1"/>
</dbReference>
<comment type="function">
    <text evidence="1">One of several proteins that assist in the late maturation steps of the functional core of the 30S ribosomal subunit. Associates with free 30S ribosomal subunits (but not with 30S subunits that are part of 70S ribosomes or polysomes). Required for efficient processing of 16S rRNA. May interact with the 5'-terminal helix region of 16S rRNA.</text>
</comment>
<comment type="subunit">
    <text evidence="1">Monomer. Binds 30S ribosomal subunits, but not 50S ribosomal subunits or 70S ribosomes.</text>
</comment>
<comment type="subcellular location">
    <subcellularLocation>
        <location evidence="1">Cytoplasm</location>
    </subcellularLocation>
</comment>
<comment type="similarity">
    <text evidence="1">Belongs to the RbfA family.</text>
</comment>
<gene>
    <name evidence="1" type="primary">rbfA</name>
    <name type="ordered locus">Acry_0226</name>
</gene>
<evidence type="ECO:0000255" key="1">
    <source>
        <dbReference type="HAMAP-Rule" id="MF_00003"/>
    </source>
</evidence>
<evidence type="ECO:0000256" key="2">
    <source>
        <dbReference type="SAM" id="MobiDB-lite"/>
    </source>
</evidence>
<sequence length="140" mass="16089">MLRDRNRSGVRGGAEGPSQRQRRVAEDLRHRLAELFARTEFRDPELAGVHITVAEVRMSPDLKHATVFVSRLGATDIDRYLPALKRIAPFLRGEIGHGLRMKFVPDLHFQPDHALDEATRINELLHRPEVMRDLLKPDEE</sequence>
<feature type="chain" id="PRO_0000321194" description="Ribosome-binding factor A">
    <location>
        <begin position="1"/>
        <end position="140"/>
    </location>
</feature>
<feature type="region of interest" description="Disordered" evidence="2">
    <location>
        <begin position="1"/>
        <end position="23"/>
    </location>
</feature>
<organism>
    <name type="scientific">Acidiphilium cryptum (strain JF-5)</name>
    <dbReference type="NCBI Taxonomy" id="349163"/>
    <lineage>
        <taxon>Bacteria</taxon>
        <taxon>Pseudomonadati</taxon>
        <taxon>Pseudomonadota</taxon>
        <taxon>Alphaproteobacteria</taxon>
        <taxon>Acetobacterales</taxon>
        <taxon>Acidocellaceae</taxon>
        <taxon>Acidiphilium</taxon>
    </lineage>
</organism>